<comment type="function">
    <text evidence="1">Transaldolase is important for the balance of metabolites in the pentose-phosphate pathway.</text>
</comment>
<comment type="catalytic activity">
    <reaction>
        <text>D-sedoheptulose 7-phosphate + D-glyceraldehyde 3-phosphate = D-erythrose 4-phosphate + beta-D-fructose 6-phosphate</text>
        <dbReference type="Rhea" id="RHEA:17053"/>
        <dbReference type="ChEBI" id="CHEBI:16897"/>
        <dbReference type="ChEBI" id="CHEBI:57483"/>
        <dbReference type="ChEBI" id="CHEBI:57634"/>
        <dbReference type="ChEBI" id="CHEBI:59776"/>
        <dbReference type="EC" id="2.2.1.2"/>
    </reaction>
</comment>
<comment type="pathway">
    <text>Carbohydrate degradation; pentose phosphate pathway; D-glyceraldehyde 3-phosphate and beta-D-fructose 6-phosphate from D-ribose 5-phosphate and D-xylulose 5-phosphate (non-oxidative stage): step 2/3.</text>
</comment>
<comment type="subcellular location">
    <subcellularLocation>
        <location evidence="1">Cytoplasm</location>
    </subcellularLocation>
</comment>
<comment type="similarity">
    <text evidence="2">Belongs to the transaldolase family. Type 2 subfamily.</text>
</comment>
<organism>
    <name type="scientific">Neisseria meningitidis serogroup A / serotype 4A (strain DSM 15465 / Z2491)</name>
    <dbReference type="NCBI Taxonomy" id="122587"/>
    <lineage>
        <taxon>Bacteria</taxon>
        <taxon>Pseudomonadati</taxon>
        <taxon>Pseudomonadota</taxon>
        <taxon>Betaproteobacteria</taxon>
        <taxon>Neisseriales</taxon>
        <taxon>Neisseriaceae</taxon>
        <taxon>Neisseria</taxon>
    </lineage>
</organism>
<proteinExistence type="inferred from homology"/>
<gene>
    <name type="primary">tal</name>
    <name type="ordered locus">NMA2136</name>
</gene>
<dbReference type="EC" id="2.2.1.2"/>
<dbReference type="EMBL" id="AL157959">
    <property type="protein sequence ID" value="CAM09233.1"/>
    <property type="molecule type" value="Genomic_DNA"/>
</dbReference>
<dbReference type="PIR" id="E81785">
    <property type="entry name" value="E81785"/>
</dbReference>
<dbReference type="RefSeq" id="WP_002230233.1">
    <property type="nucleotide sequence ID" value="NC_003116.1"/>
</dbReference>
<dbReference type="SMR" id="Q9JSU1"/>
<dbReference type="EnsemblBacteria" id="CAM09233">
    <property type="protein sequence ID" value="CAM09233"/>
    <property type="gene ID" value="NMA2136"/>
</dbReference>
<dbReference type="GeneID" id="93387443"/>
<dbReference type="KEGG" id="nma:NMA2136"/>
<dbReference type="HOGENOM" id="CLU_050771_1_0_4"/>
<dbReference type="UniPathway" id="UPA00115">
    <property type="reaction ID" value="UER00414"/>
</dbReference>
<dbReference type="Proteomes" id="UP000000626">
    <property type="component" value="Chromosome"/>
</dbReference>
<dbReference type="GO" id="GO:0005737">
    <property type="term" value="C:cytoplasm"/>
    <property type="evidence" value="ECO:0007669"/>
    <property type="project" value="UniProtKB-SubCell"/>
</dbReference>
<dbReference type="GO" id="GO:0004801">
    <property type="term" value="F:transaldolase activity"/>
    <property type="evidence" value="ECO:0007669"/>
    <property type="project" value="UniProtKB-UniRule"/>
</dbReference>
<dbReference type="GO" id="GO:0005975">
    <property type="term" value="P:carbohydrate metabolic process"/>
    <property type="evidence" value="ECO:0007669"/>
    <property type="project" value="InterPro"/>
</dbReference>
<dbReference type="GO" id="GO:0006098">
    <property type="term" value="P:pentose-phosphate shunt"/>
    <property type="evidence" value="ECO:0007669"/>
    <property type="project" value="UniProtKB-UniRule"/>
</dbReference>
<dbReference type="CDD" id="cd00955">
    <property type="entry name" value="Transaldolase_like"/>
    <property type="match status" value="1"/>
</dbReference>
<dbReference type="Gene3D" id="3.20.20.70">
    <property type="entry name" value="Aldolase class I"/>
    <property type="match status" value="1"/>
</dbReference>
<dbReference type="HAMAP" id="MF_00493">
    <property type="entry name" value="Transaldolase_2"/>
    <property type="match status" value="1"/>
</dbReference>
<dbReference type="InterPro" id="IPR013785">
    <property type="entry name" value="Aldolase_TIM"/>
</dbReference>
<dbReference type="InterPro" id="IPR001585">
    <property type="entry name" value="TAL/FSA"/>
</dbReference>
<dbReference type="InterPro" id="IPR004732">
    <property type="entry name" value="Transaldolase_2"/>
</dbReference>
<dbReference type="InterPro" id="IPR018225">
    <property type="entry name" value="Transaldolase_AS"/>
</dbReference>
<dbReference type="NCBIfam" id="NF002881">
    <property type="entry name" value="PRK03343.1"/>
    <property type="match status" value="1"/>
</dbReference>
<dbReference type="NCBIfam" id="TIGR00876">
    <property type="entry name" value="tal_mycobact"/>
    <property type="match status" value="1"/>
</dbReference>
<dbReference type="PANTHER" id="PTHR10683">
    <property type="entry name" value="TRANSALDOLASE"/>
    <property type="match status" value="1"/>
</dbReference>
<dbReference type="PANTHER" id="PTHR10683:SF31">
    <property type="entry name" value="TRANSALDOLASE"/>
    <property type="match status" value="1"/>
</dbReference>
<dbReference type="Pfam" id="PF00923">
    <property type="entry name" value="TAL_FSA"/>
    <property type="match status" value="1"/>
</dbReference>
<dbReference type="PIRSF" id="PIRSF036915">
    <property type="entry name" value="Trnald_Bac_Plnt"/>
    <property type="match status" value="1"/>
</dbReference>
<dbReference type="SUPFAM" id="SSF51569">
    <property type="entry name" value="Aldolase"/>
    <property type="match status" value="1"/>
</dbReference>
<dbReference type="PROSITE" id="PS01054">
    <property type="entry name" value="TRANSALDOLASE_1"/>
    <property type="match status" value="1"/>
</dbReference>
<dbReference type="PROSITE" id="PS00958">
    <property type="entry name" value="TRANSALDOLASE_2"/>
    <property type="match status" value="1"/>
</dbReference>
<keyword id="KW-0963">Cytoplasm</keyword>
<keyword id="KW-0570">Pentose shunt</keyword>
<keyword id="KW-0704">Schiff base</keyword>
<keyword id="KW-0808">Transferase</keyword>
<feature type="chain" id="PRO_0000173637" description="Transaldolase">
    <location>
        <begin position="1"/>
        <end position="351"/>
    </location>
</feature>
<feature type="active site" description="Schiff-base intermediate with substrate" evidence="1">
    <location>
        <position position="138"/>
    </location>
</feature>
<evidence type="ECO:0000250" key="1"/>
<evidence type="ECO:0000305" key="2"/>
<reference key="1">
    <citation type="journal article" date="2000" name="Nature">
        <title>Complete DNA sequence of a serogroup A strain of Neisseria meningitidis Z2491.</title>
        <authorList>
            <person name="Parkhill J."/>
            <person name="Achtman M."/>
            <person name="James K.D."/>
            <person name="Bentley S.D."/>
            <person name="Churcher C.M."/>
            <person name="Klee S.R."/>
            <person name="Morelli G."/>
            <person name="Basham D."/>
            <person name="Brown D."/>
            <person name="Chillingworth T."/>
            <person name="Davies R.M."/>
            <person name="Davis P."/>
            <person name="Devlin K."/>
            <person name="Feltwell T."/>
            <person name="Hamlin N."/>
            <person name="Holroyd S."/>
            <person name="Jagels K."/>
            <person name="Leather S."/>
            <person name="Moule S."/>
            <person name="Mungall K.L."/>
            <person name="Quail M.A."/>
            <person name="Rajandream M.A."/>
            <person name="Rutherford K.M."/>
            <person name="Simmonds M."/>
            <person name="Skelton J."/>
            <person name="Whitehead S."/>
            <person name="Spratt B.G."/>
            <person name="Barrell B.G."/>
        </authorList>
    </citation>
    <scope>NUCLEOTIDE SEQUENCE [LARGE SCALE GENOMIC DNA]</scope>
    <source>
        <strain>DSM 15465 / Z2491</strain>
    </source>
</reference>
<protein>
    <recommendedName>
        <fullName>Transaldolase</fullName>
        <ecNumber>2.2.1.2</ecNumber>
    </recommendedName>
</protein>
<sequence>MTILSDVKALGQQIWLDNLSRSLVQSGELAQMLKQGVCGVTSNPAIFQKAFAGDALYADEVAALKQQDLTPKQRYETMAVADVRAACGVCLAEHESTGGKTGFVSLEVSPELSKDAQGTVEEARRLYAAIGCKNAMIKVPATDAGIDALETLVSDGISVNLTLLFSRAQTLKAYAAYARGIAKRLAAGQSVAHIHVVASFFISRVDSALDTTLPDRLKGKIAIALAKAAYQDWEQYFTAPEFAALEAQGANRVQLLWASTGVKNPAYPDTLYVDSLIGAHTVNTVPDATLKAFIDHGTAKATLTEGADEAQAQLAEIAALGIDVETLAARLQEDGLKQFEEAFEKLLAPLV</sequence>
<name>TAL_NEIMA</name>
<accession>Q9JSU1</accession>
<accession>A1ITW4</accession>